<organism>
    <name type="scientific">Pseudomonas savastanoi pv. phaseolicola (strain 1448A / Race 6)</name>
    <name type="common">Pseudomonas syringae pv. phaseolicola (strain 1448A / Race 6)</name>
    <dbReference type="NCBI Taxonomy" id="264730"/>
    <lineage>
        <taxon>Bacteria</taxon>
        <taxon>Pseudomonadati</taxon>
        <taxon>Pseudomonadota</taxon>
        <taxon>Gammaproteobacteria</taxon>
        <taxon>Pseudomonadales</taxon>
        <taxon>Pseudomonadaceae</taxon>
        <taxon>Pseudomonas</taxon>
    </lineage>
</organism>
<feature type="chain" id="PRO_1000011495" description="4-hydroxy-3-methylbut-2-en-1-yl diphosphate synthase (flavodoxin)">
    <location>
        <begin position="1"/>
        <end position="369"/>
    </location>
</feature>
<feature type="binding site" evidence="1">
    <location>
        <position position="270"/>
    </location>
    <ligand>
        <name>[4Fe-4S] cluster</name>
        <dbReference type="ChEBI" id="CHEBI:49883"/>
    </ligand>
</feature>
<feature type="binding site" evidence="1">
    <location>
        <position position="273"/>
    </location>
    <ligand>
        <name>[4Fe-4S] cluster</name>
        <dbReference type="ChEBI" id="CHEBI:49883"/>
    </ligand>
</feature>
<feature type="binding site" evidence="1">
    <location>
        <position position="305"/>
    </location>
    <ligand>
        <name>[4Fe-4S] cluster</name>
        <dbReference type="ChEBI" id="CHEBI:49883"/>
    </ligand>
</feature>
<feature type="binding site" evidence="1">
    <location>
        <position position="312"/>
    </location>
    <ligand>
        <name>[4Fe-4S] cluster</name>
        <dbReference type="ChEBI" id="CHEBI:49883"/>
    </ligand>
</feature>
<proteinExistence type="inferred from homology"/>
<comment type="function">
    <text evidence="1">Converts 2C-methyl-D-erythritol 2,4-cyclodiphosphate (ME-2,4cPP) into 1-hydroxy-2-methyl-2-(E)-butenyl 4-diphosphate.</text>
</comment>
<comment type="catalytic activity">
    <reaction evidence="1">
        <text>(2E)-4-hydroxy-3-methylbut-2-enyl diphosphate + oxidized [flavodoxin] + H2O + 2 H(+) = 2-C-methyl-D-erythritol 2,4-cyclic diphosphate + reduced [flavodoxin]</text>
        <dbReference type="Rhea" id="RHEA:43604"/>
        <dbReference type="Rhea" id="RHEA-COMP:10622"/>
        <dbReference type="Rhea" id="RHEA-COMP:10623"/>
        <dbReference type="ChEBI" id="CHEBI:15377"/>
        <dbReference type="ChEBI" id="CHEBI:15378"/>
        <dbReference type="ChEBI" id="CHEBI:57618"/>
        <dbReference type="ChEBI" id="CHEBI:58210"/>
        <dbReference type="ChEBI" id="CHEBI:58483"/>
        <dbReference type="ChEBI" id="CHEBI:128753"/>
        <dbReference type="EC" id="1.17.7.3"/>
    </reaction>
</comment>
<comment type="cofactor">
    <cofactor evidence="1">
        <name>[4Fe-4S] cluster</name>
        <dbReference type="ChEBI" id="CHEBI:49883"/>
    </cofactor>
    <text evidence="1">Binds 1 [4Fe-4S] cluster.</text>
</comment>
<comment type="pathway">
    <text evidence="1">Isoprenoid biosynthesis; isopentenyl diphosphate biosynthesis via DXP pathway; isopentenyl diphosphate from 1-deoxy-D-xylulose 5-phosphate: step 5/6.</text>
</comment>
<comment type="similarity">
    <text evidence="1">Belongs to the IspG family.</text>
</comment>
<reference key="1">
    <citation type="journal article" date="2005" name="J. Bacteriol.">
        <title>Whole-genome sequence analysis of Pseudomonas syringae pv. phaseolicola 1448A reveals divergence among pathovars in genes involved in virulence and transposition.</title>
        <authorList>
            <person name="Joardar V."/>
            <person name="Lindeberg M."/>
            <person name="Jackson R.W."/>
            <person name="Selengut J."/>
            <person name="Dodson R."/>
            <person name="Brinkac L.M."/>
            <person name="Daugherty S.C."/>
            <person name="DeBoy R.T."/>
            <person name="Durkin A.S."/>
            <person name="Gwinn Giglio M."/>
            <person name="Madupu R."/>
            <person name="Nelson W.C."/>
            <person name="Rosovitz M.J."/>
            <person name="Sullivan S.A."/>
            <person name="Crabtree J."/>
            <person name="Creasy T."/>
            <person name="Davidsen T.M."/>
            <person name="Haft D.H."/>
            <person name="Zafar N."/>
            <person name="Zhou L."/>
            <person name="Halpin R."/>
            <person name="Holley T."/>
            <person name="Khouri H.M."/>
            <person name="Feldblyum T.V."/>
            <person name="White O."/>
            <person name="Fraser C.M."/>
            <person name="Chatterjee A.K."/>
            <person name="Cartinhour S."/>
            <person name="Schneider D."/>
            <person name="Mansfield J.W."/>
            <person name="Collmer A."/>
            <person name="Buell R."/>
        </authorList>
    </citation>
    <scope>NUCLEOTIDE SEQUENCE [LARGE SCALE GENOMIC DNA]</scope>
    <source>
        <strain>1448A / Race 6</strain>
    </source>
</reference>
<sequence>MHGESPIKRRESRKIWVGSVPVGGDAPIAVQSMTNSDTNDVAATVAQINRLEAAGVDIVRVSVPDMDAAEAFGRIKQLVKVPLVADIHFDYRIALRVAELGVDCLRINPGNIGREDRVRAVVDAARDRGIPIRIGVNAGSLEKDLQKKYGEPTPEALVESALRHVEHLERLNFQDFKVSVKASDVFMAVAAYRLLAKQIVQPLHLGITEAGGLRSGTVKSAVGLGMLLAEGIGDTIRISLAADPVEEVKVGYDILKSLRLRSRGINFIACPSCSRQNFDVVKTMNELEGRLEDLLVPLDVAVIGCVVNGPGEAKEAHIGLTGGTPNLIYIDGKPAQKLTNDNLVDELERLIREKAAEKAEADASVIVRG</sequence>
<dbReference type="EC" id="1.17.7.3" evidence="1"/>
<dbReference type="EMBL" id="CP000058">
    <property type="protein sequence ID" value="AAZ37610.1"/>
    <property type="molecule type" value="Genomic_DNA"/>
</dbReference>
<dbReference type="RefSeq" id="WP_004656273.1">
    <property type="nucleotide sequence ID" value="NC_005773.3"/>
</dbReference>
<dbReference type="SMR" id="Q48LZ4"/>
<dbReference type="GeneID" id="61868677"/>
<dbReference type="KEGG" id="psp:PSPPH_1320"/>
<dbReference type="eggNOG" id="COG0821">
    <property type="taxonomic scope" value="Bacteria"/>
</dbReference>
<dbReference type="HOGENOM" id="CLU_042258_0_0_6"/>
<dbReference type="UniPathway" id="UPA00056">
    <property type="reaction ID" value="UER00096"/>
</dbReference>
<dbReference type="Proteomes" id="UP000000551">
    <property type="component" value="Chromosome"/>
</dbReference>
<dbReference type="GO" id="GO:0051539">
    <property type="term" value="F:4 iron, 4 sulfur cluster binding"/>
    <property type="evidence" value="ECO:0007669"/>
    <property type="project" value="UniProtKB-UniRule"/>
</dbReference>
<dbReference type="GO" id="GO:0046429">
    <property type="term" value="F:4-hydroxy-3-methylbut-2-en-1-yl diphosphate synthase activity (ferredoxin)"/>
    <property type="evidence" value="ECO:0007669"/>
    <property type="project" value="UniProtKB-UniRule"/>
</dbReference>
<dbReference type="GO" id="GO:0141197">
    <property type="term" value="F:4-hydroxy-3-methylbut-2-enyl-diphosphate synthase activity (flavodoxin)"/>
    <property type="evidence" value="ECO:0007669"/>
    <property type="project" value="UniProtKB-EC"/>
</dbReference>
<dbReference type="GO" id="GO:0005506">
    <property type="term" value="F:iron ion binding"/>
    <property type="evidence" value="ECO:0007669"/>
    <property type="project" value="InterPro"/>
</dbReference>
<dbReference type="GO" id="GO:0019288">
    <property type="term" value="P:isopentenyl diphosphate biosynthetic process, methylerythritol 4-phosphate pathway"/>
    <property type="evidence" value="ECO:0007669"/>
    <property type="project" value="UniProtKB-UniRule"/>
</dbReference>
<dbReference type="GO" id="GO:0016114">
    <property type="term" value="P:terpenoid biosynthetic process"/>
    <property type="evidence" value="ECO:0007669"/>
    <property type="project" value="InterPro"/>
</dbReference>
<dbReference type="FunFam" id="3.20.20.20:FF:000001">
    <property type="entry name" value="4-hydroxy-3-methylbut-2-en-1-yl diphosphate synthase (flavodoxin)"/>
    <property type="match status" value="1"/>
</dbReference>
<dbReference type="Gene3D" id="3.20.20.20">
    <property type="entry name" value="Dihydropteroate synthase-like"/>
    <property type="match status" value="1"/>
</dbReference>
<dbReference type="Gene3D" id="3.30.413.10">
    <property type="entry name" value="Sulfite Reductase Hemoprotein, domain 1"/>
    <property type="match status" value="1"/>
</dbReference>
<dbReference type="HAMAP" id="MF_00159">
    <property type="entry name" value="IspG"/>
    <property type="match status" value="1"/>
</dbReference>
<dbReference type="InterPro" id="IPR011005">
    <property type="entry name" value="Dihydropteroate_synth-like_sf"/>
</dbReference>
<dbReference type="InterPro" id="IPR016425">
    <property type="entry name" value="IspG_bac"/>
</dbReference>
<dbReference type="InterPro" id="IPR004588">
    <property type="entry name" value="IspG_bac-typ"/>
</dbReference>
<dbReference type="InterPro" id="IPR045854">
    <property type="entry name" value="NO2/SO3_Rdtase_4Fe4S_sf"/>
</dbReference>
<dbReference type="NCBIfam" id="TIGR00612">
    <property type="entry name" value="ispG_gcpE"/>
    <property type="match status" value="1"/>
</dbReference>
<dbReference type="NCBIfam" id="NF001540">
    <property type="entry name" value="PRK00366.1"/>
    <property type="match status" value="1"/>
</dbReference>
<dbReference type="PANTHER" id="PTHR30454">
    <property type="entry name" value="4-HYDROXY-3-METHYLBUT-2-EN-1-YL DIPHOSPHATE SYNTHASE"/>
    <property type="match status" value="1"/>
</dbReference>
<dbReference type="PANTHER" id="PTHR30454:SF0">
    <property type="entry name" value="4-HYDROXY-3-METHYLBUT-2-EN-1-YL DIPHOSPHATE SYNTHASE (FERREDOXIN), CHLOROPLASTIC"/>
    <property type="match status" value="1"/>
</dbReference>
<dbReference type="Pfam" id="PF04551">
    <property type="entry name" value="GcpE"/>
    <property type="match status" value="1"/>
</dbReference>
<dbReference type="PIRSF" id="PIRSF004640">
    <property type="entry name" value="IspG"/>
    <property type="match status" value="1"/>
</dbReference>
<dbReference type="SUPFAM" id="SSF51412">
    <property type="entry name" value="Inosine monophosphate dehydrogenase (IMPDH)"/>
    <property type="match status" value="1"/>
</dbReference>
<dbReference type="SUPFAM" id="SSF56014">
    <property type="entry name" value="Nitrite and sulphite reductase 4Fe-4S domain-like"/>
    <property type="match status" value="1"/>
</dbReference>
<evidence type="ECO:0000255" key="1">
    <source>
        <dbReference type="HAMAP-Rule" id="MF_00159"/>
    </source>
</evidence>
<protein>
    <recommendedName>
        <fullName evidence="1">4-hydroxy-3-methylbut-2-en-1-yl diphosphate synthase (flavodoxin)</fullName>
        <ecNumber evidence="1">1.17.7.3</ecNumber>
    </recommendedName>
    <alternativeName>
        <fullName evidence="1">1-hydroxy-2-methyl-2-(E)-butenyl 4-diphosphate synthase</fullName>
    </alternativeName>
</protein>
<keyword id="KW-0004">4Fe-4S</keyword>
<keyword id="KW-0408">Iron</keyword>
<keyword id="KW-0411">Iron-sulfur</keyword>
<keyword id="KW-0414">Isoprene biosynthesis</keyword>
<keyword id="KW-0479">Metal-binding</keyword>
<keyword id="KW-0560">Oxidoreductase</keyword>
<name>ISPG_PSE14</name>
<gene>
    <name evidence="1" type="primary">ispG</name>
    <name type="ordered locus">PSPPH_1320</name>
</gene>
<accession>Q48LZ4</accession>